<organism>
    <name type="scientific">Anabaena sp. (strain L31)</name>
    <dbReference type="NCBI Taxonomy" id="29412"/>
    <lineage>
        <taxon>Bacteria</taxon>
        <taxon>Bacillati</taxon>
        <taxon>Cyanobacteriota</taxon>
        <taxon>Cyanophyceae</taxon>
        <taxon>Nostocales</taxon>
        <taxon>Nostocaceae</taxon>
        <taxon>Anabaena</taxon>
    </lineage>
</organism>
<protein>
    <recommendedName>
        <fullName evidence="1">Potassium-transporting ATPase potassium-binding subunit</fullName>
    </recommendedName>
    <alternativeName>
        <fullName evidence="1">ATP phosphohydrolase [potassium-transporting] A chain</fullName>
    </alternativeName>
    <alternativeName>
        <fullName evidence="1">Potassium-binding and translocating subunit A</fullName>
    </alternativeName>
    <alternativeName>
        <fullName evidence="1">Potassium-translocating ATPase A chain</fullName>
    </alternativeName>
</protein>
<reference key="1">
    <citation type="submission" date="1999-12" db="EMBL/GenBank/DDBJ databases">
        <title>The kdp operon of the heterocystous nitrogen-fixing cyanobacterium Anabaena sp. strain L-31.</title>
        <authorList>
            <person name="Ballal A.D."/>
            <person name="Gassel M."/>
            <person name="Schleussinger E."/>
            <person name="Rajaram H."/>
            <person name="Apte S.K."/>
            <person name="Altendorf K."/>
        </authorList>
    </citation>
    <scope>NUCLEOTIDE SEQUENCE [GENOMIC DNA]</scope>
</reference>
<keyword id="KW-1003">Cell membrane</keyword>
<keyword id="KW-0406">Ion transport</keyword>
<keyword id="KW-0472">Membrane</keyword>
<keyword id="KW-0630">Potassium</keyword>
<keyword id="KW-0633">Potassium transport</keyword>
<keyword id="KW-0812">Transmembrane</keyword>
<keyword id="KW-1133">Transmembrane helix</keyword>
<keyword id="KW-0813">Transport</keyword>
<accession>Q9R6X2</accession>
<dbReference type="EMBL" id="AF213466">
    <property type="protein sequence ID" value="AAF19986.1"/>
    <property type="molecule type" value="Genomic_DNA"/>
</dbReference>
<dbReference type="PIR" id="T46845">
    <property type="entry name" value="T46845"/>
</dbReference>
<dbReference type="SMR" id="Q9R6X2"/>
<dbReference type="GO" id="GO:0005886">
    <property type="term" value="C:plasma membrane"/>
    <property type="evidence" value="ECO:0007669"/>
    <property type="project" value="UniProtKB-SubCell"/>
</dbReference>
<dbReference type="GO" id="GO:0008556">
    <property type="term" value="F:P-type potassium transmembrane transporter activity"/>
    <property type="evidence" value="ECO:0007669"/>
    <property type="project" value="InterPro"/>
</dbReference>
<dbReference type="GO" id="GO:0030955">
    <property type="term" value="F:potassium ion binding"/>
    <property type="evidence" value="ECO:0007669"/>
    <property type="project" value="UniProtKB-UniRule"/>
</dbReference>
<dbReference type="HAMAP" id="MF_00275">
    <property type="entry name" value="KdpA"/>
    <property type="match status" value="1"/>
</dbReference>
<dbReference type="InterPro" id="IPR004623">
    <property type="entry name" value="KdpA"/>
</dbReference>
<dbReference type="NCBIfam" id="TIGR00680">
    <property type="entry name" value="kdpA"/>
    <property type="match status" value="1"/>
</dbReference>
<dbReference type="PANTHER" id="PTHR30607">
    <property type="entry name" value="POTASSIUM-TRANSPORTING ATPASE A CHAIN"/>
    <property type="match status" value="1"/>
</dbReference>
<dbReference type="PANTHER" id="PTHR30607:SF2">
    <property type="entry name" value="POTASSIUM-TRANSPORTING ATPASE POTASSIUM-BINDING SUBUNIT"/>
    <property type="match status" value="1"/>
</dbReference>
<dbReference type="Pfam" id="PF03814">
    <property type="entry name" value="KdpA"/>
    <property type="match status" value="1"/>
</dbReference>
<dbReference type="PIRSF" id="PIRSF001294">
    <property type="entry name" value="K_ATPaseA"/>
    <property type="match status" value="1"/>
</dbReference>
<gene>
    <name evidence="1" type="primary">kdpA</name>
</gene>
<proteinExistence type="inferred from homology"/>
<feature type="chain" id="PRO_0000166475" description="Potassium-transporting ATPase potassium-binding subunit">
    <location>
        <begin position="1"/>
        <end position="561"/>
    </location>
</feature>
<feature type="transmembrane region" description="Helical" evidence="1">
    <location>
        <begin position="2"/>
        <end position="22"/>
    </location>
</feature>
<feature type="transmembrane region" description="Helical" evidence="1">
    <location>
        <begin position="65"/>
        <end position="85"/>
    </location>
</feature>
<feature type="transmembrane region" description="Helical" evidence="1">
    <location>
        <begin position="135"/>
        <end position="155"/>
    </location>
</feature>
<feature type="transmembrane region" description="Helical" evidence="1">
    <location>
        <begin position="177"/>
        <end position="197"/>
    </location>
</feature>
<feature type="transmembrane region" description="Helical" evidence="1">
    <location>
        <begin position="253"/>
        <end position="273"/>
    </location>
</feature>
<feature type="transmembrane region" description="Helical" evidence="1">
    <location>
        <begin position="280"/>
        <end position="300"/>
    </location>
</feature>
<feature type="transmembrane region" description="Helical" evidence="1">
    <location>
        <begin position="327"/>
        <end position="347"/>
    </location>
</feature>
<feature type="transmembrane region" description="Helical" evidence="1">
    <location>
        <begin position="353"/>
        <end position="373"/>
    </location>
</feature>
<feature type="transmembrane region" description="Helical" evidence="1">
    <location>
        <begin position="378"/>
        <end position="398"/>
    </location>
</feature>
<feature type="transmembrane region" description="Helical" evidence="1">
    <location>
        <begin position="413"/>
        <end position="433"/>
    </location>
</feature>
<feature type="transmembrane region" description="Helical" evidence="1">
    <location>
        <begin position="482"/>
        <end position="502"/>
    </location>
</feature>
<feature type="transmembrane region" description="Helical" evidence="1">
    <location>
        <begin position="531"/>
        <end position="551"/>
    </location>
</feature>
<sequence>MGLGLLQIGLTLCIVIAITPVLGRYIARVFLEERTILDPLMNPIERSIYVISGVRPKDDMTGWQYIRAILYTNLFMGILVYSLIHYQRLLPWNPNGFGVPRWDIILHTVVSFVTNTDQQHYAGETTLSYFSQVAALGFLMFTSAATGLAVGIAFIRGLTGKKLGNFYIDLTRGITRILLPISVIGAIALVLLGVPQTLGGSLTITTLEGGTQYIARGPVASFEMIKMLGENGGGFFAANSAHPFENPNGATNFIETIAMIAIPAAMIYTYGVFAKNIKQAWLLFWMVFIVFVILVWVAATGELQGNPLVNGTLGIEKPNLEGKELRFGWAETALWAVMTTATMCGAVNGMHDALMPQGLFATLFNLFLQIIWGGQGTGTAYLFIYLILTVFLTGLMVGRTPEIFGRKIEKREIVLASLILLVHPIVVLIPSAIALAYPYSLSGITNPGFHGISQVVYEYASASSNNGSGLEGLTDNSLWWNLSTSLSILVGRYVPIIAMLLLADSMSRKQTVPQTPGTLKTDSLLFTTVTAGIVLILGVLTFFPVLALGPIAEAFKLASGS</sequence>
<name>KDPA_ANASL</name>
<evidence type="ECO:0000255" key="1">
    <source>
        <dbReference type="HAMAP-Rule" id="MF_00275"/>
    </source>
</evidence>
<comment type="function">
    <text evidence="1">Part of the high-affinity ATP-driven potassium transport (or Kdp) system, which catalyzes the hydrolysis of ATP coupled with the electrogenic transport of potassium into the cytoplasm. This subunit binds the extracellular potassium ions and delivers the ions to the membrane domain of KdpB through an intramembrane tunnel.</text>
</comment>
<comment type="subunit">
    <text evidence="1">The system is composed of three essential subunits: KdpA, KdpB and KdpC.</text>
</comment>
<comment type="subcellular location">
    <subcellularLocation>
        <location evidence="1">Cell membrane</location>
        <topology evidence="1">Multi-pass membrane protein</topology>
    </subcellularLocation>
</comment>
<comment type="similarity">
    <text evidence="1">Belongs to the KdpA family.</text>
</comment>